<organism>
    <name type="scientific">Cronobacter sakazakii (strain ATCC BAA-894)</name>
    <name type="common">Enterobacter sakazakii</name>
    <dbReference type="NCBI Taxonomy" id="290339"/>
    <lineage>
        <taxon>Bacteria</taxon>
        <taxon>Pseudomonadati</taxon>
        <taxon>Pseudomonadota</taxon>
        <taxon>Gammaproteobacteria</taxon>
        <taxon>Enterobacterales</taxon>
        <taxon>Enterobacteriaceae</taxon>
        <taxon>Cronobacter</taxon>
    </lineage>
</organism>
<feature type="chain" id="PRO_1000011620" description="GTPase Der">
    <location>
        <begin position="1"/>
        <end position="492"/>
    </location>
</feature>
<feature type="domain" description="EngA-type G 1">
    <location>
        <begin position="3"/>
        <end position="166"/>
    </location>
</feature>
<feature type="domain" description="EngA-type G 2">
    <location>
        <begin position="205"/>
        <end position="378"/>
    </location>
</feature>
<feature type="domain" description="KH-like" evidence="1">
    <location>
        <begin position="379"/>
        <end position="463"/>
    </location>
</feature>
<feature type="binding site" evidence="1">
    <location>
        <begin position="9"/>
        <end position="16"/>
    </location>
    <ligand>
        <name>GTP</name>
        <dbReference type="ChEBI" id="CHEBI:37565"/>
        <label>1</label>
    </ligand>
</feature>
<feature type="binding site" evidence="1">
    <location>
        <begin position="56"/>
        <end position="60"/>
    </location>
    <ligand>
        <name>GTP</name>
        <dbReference type="ChEBI" id="CHEBI:37565"/>
        <label>1</label>
    </ligand>
</feature>
<feature type="binding site" evidence="1">
    <location>
        <begin position="118"/>
        <end position="121"/>
    </location>
    <ligand>
        <name>GTP</name>
        <dbReference type="ChEBI" id="CHEBI:37565"/>
        <label>1</label>
    </ligand>
</feature>
<feature type="binding site" evidence="1">
    <location>
        <begin position="211"/>
        <end position="218"/>
    </location>
    <ligand>
        <name>GTP</name>
        <dbReference type="ChEBI" id="CHEBI:37565"/>
        <label>2</label>
    </ligand>
</feature>
<feature type="binding site" evidence="1">
    <location>
        <begin position="258"/>
        <end position="262"/>
    </location>
    <ligand>
        <name>GTP</name>
        <dbReference type="ChEBI" id="CHEBI:37565"/>
        <label>2</label>
    </ligand>
</feature>
<feature type="binding site" evidence="1">
    <location>
        <begin position="323"/>
        <end position="326"/>
    </location>
    <ligand>
        <name>GTP</name>
        <dbReference type="ChEBI" id="CHEBI:37565"/>
        <label>2</label>
    </ligand>
</feature>
<keyword id="KW-0342">GTP-binding</keyword>
<keyword id="KW-0547">Nucleotide-binding</keyword>
<keyword id="KW-1185">Reference proteome</keyword>
<keyword id="KW-0677">Repeat</keyword>
<keyword id="KW-0690">Ribosome biogenesis</keyword>
<accession>A7MGU7</accession>
<reference key="1">
    <citation type="journal article" date="2010" name="PLoS ONE">
        <title>Genome sequence of Cronobacter sakazakii BAA-894 and comparative genomic hybridization analysis with other Cronobacter species.</title>
        <authorList>
            <person name="Kucerova E."/>
            <person name="Clifton S.W."/>
            <person name="Xia X.Q."/>
            <person name="Long F."/>
            <person name="Porwollik S."/>
            <person name="Fulton L."/>
            <person name="Fronick C."/>
            <person name="Minx P."/>
            <person name="Kyung K."/>
            <person name="Warren W."/>
            <person name="Fulton R."/>
            <person name="Feng D."/>
            <person name="Wollam A."/>
            <person name="Shah N."/>
            <person name="Bhonagiri V."/>
            <person name="Nash W.E."/>
            <person name="Hallsworth-Pepin K."/>
            <person name="Wilson R.K."/>
            <person name="McClelland M."/>
            <person name="Forsythe S.J."/>
        </authorList>
    </citation>
    <scope>NUCLEOTIDE SEQUENCE [LARGE SCALE GENOMIC DNA]</scope>
    <source>
        <strain>ATCC BAA-894</strain>
    </source>
</reference>
<protein>
    <recommendedName>
        <fullName evidence="1">GTPase Der</fullName>
    </recommendedName>
    <alternativeName>
        <fullName evidence="1">GTP-binding protein EngA</fullName>
    </alternativeName>
</protein>
<proteinExistence type="inferred from homology"/>
<gene>
    <name evidence="1" type="primary">der</name>
    <name type="synonym">engA</name>
    <name type="ordered locus">ESA_00749</name>
</gene>
<name>DER_CROS8</name>
<evidence type="ECO:0000255" key="1">
    <source>
        <dbReference type="HAMAP-Rule" id="MF_00195"/>
    </source>
</evidence>
<dbReference type="EMBL" id="CP000783">
    <property type="protein sequence ID" value="ABU76026.1"/>
    <property type="molecule type" value="Genomic_DNA"/>
</dbReference>
<dbReference type="RefSeq" id="WP_004386980.1">
    <property type="nucleotide sequence ID" value="NC_009778.1"/>
</dbReference>
<dbReference type="SMR" id="A7MGU7"/>
<dbReference type="GeneID" id="56729633"/>
<dbReference type="KEGG" id="esa:ESA_00749"/>
<dbReference type="HOGENOM" id="CLU_016077_6_2_6"/>
<dbReference type="Proteomes" id="UP000000260">
    <property type="component" value="Chromosome"/>
</dbReference>
<dbReference type="GO" id="GO:0005525">
    <property type="term" value="F:GTP binding"/>
    <property type="evidence" value="ECO:0007669"/>
    <property type="project" value="UniProtKB-UniRule"/>
</dbReference>
<dbReference type="GO" id="GO:0043022">
    <property type="term" value="F:ribosome binding"/>
    <property type="evidence" value="ECO:0007669"/>
    <property type="project" value="TreeGrafter"/>
</dbReference>
<dbReference type="GO" id="GO:0042254">
    <property type="term" value="P:ribosome biogenesis"/>
    <property type="evidence" value="ECO:0007669"/>
    <property type="project" value="UniProtKB-KW"/>
</dbReference>
<dbReference type="CDD" id="cd01894">
    <property type="entry name" value="EngA1"/>
    <property type="match status" value="1"/>
</dbReference>
<dbReference type="CDD" id="cd01895">
    <property type="entry name" value="EngA2"/>
    <property type="match status" value="1"/>
</dbReference>
<dbReference type="FunFam" id="3.30.300.20:FF:000004">
    <property type="entry name" value="GTPase Der"/>
    <property type="match status" value="1"/>
</dbReference>
<dbReference type="FunFam" id="3.40.50.300:FF:000040">
    <property type="entry name" value="GTPase Der"/>
    <property type="match status" value="1"/>
</dbReference>
<dbReference type="FunFam" id="3.40.50.300:FF:000057">
    <property type="entry name" value="GTPase Der"/>
    <property type="match status" value="1"/>
</dbReference>
<dbReference type="Gene3D" id="3.30.300.20">
    <property type="match status" value="1"/>
</dbReference>
<dbReference type="Gene3D" id="3.40.50.300">
    <property type="entry name" value="P-loop containing nucleotide triphosphate hydrolases"/>
    <property type="match status" value="2"/>
</dbReference>
<dbReference type="HAMAP" id="MF_00195">
    <property type="entry name" value="GTPase_Der"/>
    <property type="match status" value="1"/>
</dbReference>
<dbReference type="InterPro" id="IPR031166">
    <property type="entry name" value="G_ENGA"/>
</dbReference>
<dbReference type="InterPro" id="IPR006073">
    <property type="entry name" value="GTP-bd"/>
</dbReference>
<dbReference type="InterPro" id="IPR016484">
    <property type="entry name" value="GTPase_Der"/>
</dbReference>
<dbReference type="InterPro" id="IPR032859">
    <property type="entry name" value="KH_dom-like"/>
</dbReference>
<dbReference type="InterPro" id="IPR015946">
    <property type="entry name" value="KH_dom-like_a/b"/>
</dbReference>
<dbReference type="InterPro" id="IPR027417">
    <property type="entry name" value="P-loop_NTPase"/>
</dbReference>
<dbReference type="InterPro" id="IPR005225">
    <property type="entry name" value="Small_GTP-bd"/>
</dbReference>
<dbReference type="NCBIfam" id="TIGR03594">
    <property type="entry name" value="GTPase_EngA"/>
    <property type="match status" value="1"/>
</dbReference>
<dbReference type="NCBIfam" id="TIGR00231">
    <property type="entry name" value="small_GTP"/>
    <property type="match status" value="2"/>
</dbReference>
<dbReference type="PANTHER" id="PTHR43834">
    <property type="entry name" value="GTPASE DER"/>
    <property type="match status" value="1"/>
</dbReference>
<dbReference type="PANTHER" id="PTHR43834:SF6">
    <property type="entry name" value="GTPASE DER"/>
    <property type="match status" value="1"/>
</dbReference>
<dbReference type="Pfam" id="PF14714">
    <property type="entry name" value="KH_dom-like"/>
    <property type="match status" value="1"/>
</dbReference>
<dbReference type="Pfam" id="PF01926">
    <property type="entry name" value="MMR_HSR1"/>
    <property type="match status" value="2"/>
</dbReference>
<dbReference type="PIRSF" id="PIRSF006485">
    <property type="entry name" value="GTP-binding_EngA"/>
    <property type="match status" value="1"/>
</dbReference>
<dbReference type="PRINTS" id="PR00326">
    <property type="entry name" value="GTP1OBG"/>
</dbReference>
<dbReference type="SUPFAM" id="SSF52540">
    <property type="entry name" value="P-loop containing nucleoside triphosphate hydrolases"/>
    <property type="match status" value="2"/>
</dbReference>
<dbReference type="PROSITE" id="PS51712">
    <property type="entry name" value="G_ENGA"/>
    <property type="match status" value="2"/>
</dbReference>
<sequence length="492" mass="55137">MIPVVALVGRPNVGKSTLFNRLTRTRDALVADFPGLTRDRKYGRAEVEGREFICIDTGGIDGSEEGVETRMAEQSLLAIEEADVVLFMVDARAGLMPADEAIAKHLRSRQKPTFLVANKTDGLDPDQAVSDFYSLGLGEIHPIAASHGRGVTSLLEHVLVPWMDDVDPPEEVDEEAEYWAQFEAEQNGELVEEEEDDFNPQDLPIKLAIVGRPNVGKSTLTNRILGEDRVVVFDMPGTTRDSIYIPMERDGREFVLIDTAGVRKRGKITDVVEKFSVIKTLQAIEDANVVLLVIDAREGISDQDLSLLGFILNSGRSLVIVVNKWDGLSQEVKEEVKETLDYRLGFIDFARVHFISALHGSGVGNLFESVREAYDSSTRRVSTALLTRIMKMAEEDHQPPMVRGRRVKLKYAHAGGYNPPIVVIHGTQVKDLPDSYKRYLMNYFRKSLDVMGTPIRIQFKEGANPFANKRNTLTPNQLRKRKRLIKHIKKSK</sequence>
<comment type="function">
    <text evidence="1">GTPase that plays an essential role in the late steps of ribosome biogenesis.</text>
</comment>
<comment type="subunit">
    <text evidence="1">Associates with the 50S ribosomal subunit.</text>
</comment>
<comment type="similarity">
    <text evidence="1">Belongs to the TRAFAC class TrmE-Era-EngA-EngB-Septin-like GTPase superfamily. EngA (Der) GTPase family.</text>
</comment>